<dbReference type="EMBL" id="CP001100">
    <property type="protein sequence ID" value="ACF13843.1"/>
    <property type="molecule type" value="Genomic_DNA"/>
</dbReference>
<dbReference type="RefSeq" id="WP_012499927.1">
    <property type="nucleotide sequence ID" value="NC_011026.1"/>
</dbReference>
<dbReference type="SMR" id="B3QZF0"/>
<dbReference type="STRING" id="517418.Ctha_1380"/>
<dbReference type="KEGG" id="cts:Ctha_1380"/>
<dbReference type="eggNOG" id="COG0711">
    <property type="taxonomic scope" value="Bacteria"/>
</dbReference>
<dbReference type="HOGENOM" id="CLU_079215_4_1_10"/>
<dbReference type="OrthoDB" id="9795289at2"/>
<dbReference type="Proteomes" id="UP000001208">
    <property type="component" value="Chromosome"/>
</dbReference>
<dbReference type="GO" id="GO:0005886">
    <property type="term" value="C:plasma membrane"/>
    <property type="evidence" value="ECO:0007669"/>
    <property type="project" value="UniProtKB-SubCell"/>
</dbReference>
<dbReference type="GO" id="GO:0045259">
    <property type="term" value="C:proton-transporting ATP synthase complex"/>
    <property type="evidence" value="ECO:0007669"/>
    <property type="project" value="UniProtKB-KW"/>
</dbReference>
<dbReference type="GO" id="GO:0046933">
    <property type="term" value="F:proton-transporting ATP synthase activity, rotational mechanism"/>
    <property type="evidence" value="ECO:0007669"/>
    <property type="project" value="UniProtKB-UniRule"/>
</dbReference>
<dbReference type="GO" id="GO:0046961">
    <property type="term" value="F:proton-transporting ATPase activity, rotational mechanism"/>
    <property type="evidence" value="ECO:0007669"/>
    <property type="project" value="TreeGrafter"/>
</dbReference>
<dbReference type="CDD" id="cd06503">
    <property type="entry name" value="ATP-synt_Fo_b"/>
    <property type="match status" value="1"/>
</dbReference>
<dbReference type="Gene3D" id="1.20.5.620">
    <property type="entry name" value="F1F0 ATP synthase subunit B, membrane domain"/>
    <property type="match status" value="1"/>
</dbReference>
<dbReference type="HAMAP" id="MF_01398">
    <property type="entry name" value="ATP_synth_b_bprime"/>
    <property type="match status" value="1"/>
</dbReference>
<dbReference type="InterPro" id="IPR028987">
    <property type="entry name" value="ATP_synth_B-like_membr_sf"/>
</dbReference>
<dbReference type="InterPro" id="IPR002146">
    <property type="entry name" value="ATP_synth_b/b'su_bac/chlpt"/>
</dbReference>
<dbReference type="InterPro" id="IPR005864">
    <property type="entry name" value="ATP_synth_F0_bsu_bac"/>
</dbReference>
<dbReference type="InterPro" id="IPR050059">
    <property type="entry name" value="ATP_synthase_B_chain"/>
</dbReference>
<dbReference type="NCBIfam" id="TIGR01144">
    <property type="entry name" value="ATP_synt_b"/>
    <property type="match status" value="1"/>
</dbReference>
<dbReference type="NCBIfam" id="NF011042">
    <property type="entry name" value="PRK14472.1"/>
    <property type="match status" value="1"/>
</dbReference>
<dbReference type="PANTHER" id="PTHR33445:SF1">
    <property type="entry name" value="ATP SYNTHASE SUBUNIT B"/>
    <property type="match status" value="1"/>
</dbReference>
<dbReference type="PANTHER" id="PTHR33445">
    <property type="entry name" value="ATP SYNTHASE SUBUNIT B', CHLOROPLASTIC"/>
    <property type="match status" value="1"/>
</dbReference>
<dbReference type="Pfam" id="PF00430">
    <property type="entry name" value="ATP-synt_B"/>
    <property type="match status" value="1"/>
</dbReference>
<dbReference type="SUPFAM" id="SSF81573">
    <property type="entry name" value="F1F0 ATP synthase subunit B, membrane domain"/>
    <property type="match status" value="1"/>
</dbReference>
<accession>B3QZF0</accession>
<proteinExistence type="inferred from homology"/>
<protein>
    <recommendedName>
        <fullName evidence="2">ATP synthase subunit b</fullName>
    </recommendedName>
    <alternativeName>
        <fullName evidence="2">ATP synthase F(0) sector subunit b</fullName>
    </alternativeName>
    <alternativeName>
        <fullName evidence="2">ATPase subunit I</fullName>
    </alternativeName>
    <alternativeName>
        <fullName evidence="2">F-type ATPase subunit b</fullName>
        <shortName evidence="2">F-ATPase subunit b</shortName>
    </alternativeName>
</protein>
<keyword id="KW-0066">ATP synthesis</keyword>
<keyword id="KW-0997">Cell inner membrane</keyword>
<keyword id="KW-1003">Cell membrane</keyword>
<keyword id="KW-0138">CF(0)</keyword>
<keyword id="KW-0375">Hydrogen ion transport</keyword>
<keyword id="KW-0406">Ion transport</keyword>
<keyword id="KW-0472">Membrane</keyword>
<keyword id="KW-1185">Reference proteome</keyword>
<keyword id="KW-0812">Transmembrane</keyword>
<keyword id="KW-1133">Transmembrane helix</keyword>
<keyword id="KW-0813">Transport</keyword>
<gene>
    <name evidence="2" type="primary">atpF</name>
    <name type="ordered locus">Ctha_1380</name>
</gene>
<name>ATPF_CHLT3</name>
<organism>
    <name type="scientific">Chloroherpeton thalassium (strain ATCC 35110 / GB-78)</name>
    <dbReference type="NCBI Taxonomy" id="517418"/>
    <lineage>
        <taxon>Bacteria</taxon>
        <taxon>Pseudomonadati</taxon>
        <taxon>Chlorobiota</taxon>
        <taxon>Chlorobiia</taxon>
        <taxon>Chlorobiales</taxon>
        <taxon>Chloroherpetonaceae</taxon>
        <taxon>Chloroherpeton</taxon>
    </lineage>
</organism>
<sequence>MLTTGMFLLEGSLLSPNPGLIFWTAVTFLLLLLLLKKLAWGPILSALEEREKSIQSAIDRANSAKDDAEKLLSKNKDAMNKAEVEADRIIKEGKEYAEKMRNEIVTKAQEEAKKIAAQAKAEIEQEKQQALNALRDEVATLAVKGAEKIIRMNLDAEKHKAVVEGMLEDLSTKRN</sequence>
<feature type="chain" id="PRO_0000368414" description="ATP synthase subunit b">
    <location>
        <begin position="1"/>
        <end position="175"/>
    </location>
</feature>
<feature type="transmembrane region" description="Helical" evidence="2">
    <location>
        <begin position="13"/>
        <end position="33"/>
    </location>
</feature>
<reference key="1">
    <citation type="submission" date="2008-06" db="EMBL/GenBank/DDBJ databases">
        <title>Complete sequence of Chloroherpeton thalassium ATCC 35110.</title>
        <authorList>
            <consortium name="US DOE Joint Genome Institute"/>
            <person name="Lucas S."/>
            <person name="Copeland A."/>
            <person name="Lapidus A."/>
            <person name="Glavina del Rio T."/>
            <person name="Dalin E."/>
            <person name="Tice H."/>
            <person name="Bruce D."/>
            <person name="Goodwin L."/>
            <person name="Pitluck S."/>
            <person name="Schmutz J."/>
            <person name="Larimer F."/>
            <person name="Land M."/>
            <person name="Hauser L."/>
            <person name="Kyrpides N."/>
            <person name="Mikhailova N."/>
            <person name="Liu Z."/>
            <person name="Li T."/>
            <person name="Zhao F."/>
            <person name="Overmann J."/>
            <person name="Bryant D.A."/>
            <person name="Richardson P."/>
        </authorList>
    </citation>
    <scope>NUCLEOTIDE SEQUENCE [LARGE SCALE GENOMIC DNA]</scope>
    <source>
        <strain>ATCC 35110 / GB-78</strain>
    </source>
</reference>
<comment type="function">
    <text evidence="2">F(1)F(0) ATP synthase produces ATP from ADP in the presence of a proton or sodium gradient. F-type ATPases consist of two structural domains, F(1) containing the extramembraneous catalytic core and F(0) containing the membrane proton channel, linked together by a central stalk and a peripheral stalk. During catalysis, ATP synthesis in the catalytic domain of F(1) is coupled via a rotary mechanism of the central stalk subunits to proton translocation.</text>
</comment>
<comment type="function">
    <text evidence="2">Component of the F(0) channel, it forms part of the peripheral stalk, linking F(1) to F(0).</text>
</comment>
<comment type="subunit">
    <text evidence="1">F-type ATPases have 2 components, F(1) - the catalytic core - and F(0) - the membrane proton channel. F(1) has five subunits: alpha(3), beta(3), gamma(1), delta(1), epsilon(1). F(0) has four main subunits: a(1), b(2) and c(10-14). The alpha and beta chains form an alternating ring which encloses part of the gamma chain. F(1) is attached to F(0) by a central stalk formed by the gamma and epsilon chains, while a peripheral stalk is formed by the delta and b chains (By similarity).</text>
</comment>
<comment type="subcellular location">
    <subcellularLocation>
        <location evidence="2">Cell inner membrane</location>
        <topology evidence="2">Single-pass membrane protein</topology>
    </subcellularLocation>
</comment>
<comment type="similarity">
    <text evidence="2">Belongs to the ATPase B chain family.</text>
</comment>
<evidence type="ECO:0000250" key="1"/>
<evidence type="ECO:0000255" key="2">
    <source>
        <dbReference type="HAMAP-Rule" id="MF_01398"/>
    </source>
</evidence>